<feature type="chain" id="PRO_0000170757" description="Lactose permease">
    <location>
        <begin position="1"/>
        <end position="627"/>
    </location>
</feature>
<feature type="transmembrane region" description="Helical" evidence="2">
    <location>
        <begin position="13"/>
        <end position="33"/>
    </location>
</feature>
<feature type="transmembrane region" description="Helical" evidence="2">
    <location>
        <begin position="46"/>
        <end position="66"/>
    </location>
</feature>
<feature type="transmembrane region" description="Helical" evidence="2">
    <location>
        <begin position="84"/>
        <end position="104"/>
    </location>
</feature>
<feature type="transmembrane region" description="Helical" evidence="2">
    <location>
        <begin position="111"/>
        <end position="131"/>
    </location>
</feature>
<feature type="transmembrane region" description="Helical" evidence="2">
    <location>
        <begin position="159"/>
        <end position="179"/>
    </location>
</feature>
<feature type="transmembrane region" description="Helical" evidence="2">
    <location>
        <begin position="193"/>
        <end position="213"/>
    </location>
</feature>
<feature type="transmembrane region" description="Helical" evidence="2">
    <location>
        <begin position="244"/>
        <end position="264"/>
    </location>
</feature>
<feature type="transmembrane region" description="Helical" evidence="2">
    <location>
        <begin position="281"/>
        <end position="301"/>
    </location>
</feature>
<feature type="transmembrane region" description="Helical" evidence="2">
    <location>
        <begin position="309"/>
        <end position="329"/>
    </location>
</feature>
<feature type="transmembrane region" description="Helical" evidence="2">
    <location>
        <begin position="336"/>
        <end position="356"/>
    </location>
</feature>
<feature type="transmembrane region" description="Helical" evidence="2">
    <location>
        <begin position="392"/>
        <end position="412"/>
    </location>
</feature>
<feature type="transmembrane region" description="Helical" evidence="2">
    <location>
        <begin position="419"/>
        <end position="439"/>
    </location>
</feature>
<feature type="domain" description="PTS EIIA type-1" evidence="3">
    <location>
        <begin position="493"/>
        <end position="597"/>
    </location>
</feature>
<feature type="region of interest" description="Permease">
    <location>
        <begin position="1"/>
        <end position="460"/>
    </location>
</feature>
<feature type="modified residue" description="Phosphohistidine; by HPr" evidence="1">
    <location>
        <position position="545"/>
    </location>
</feature>
<keyword id="KW-1003">Cell membrane</keyword>
<keyword id="KW-0418">Kinase</keyword>
<keyword id="KW-0472">Membrane</keyword>
<keyword id="KW-0597">Phosphoprotein</keyword>
<keyword id="KW-1185">Reference proteome</keyword>
<keyword id="KW-0762">Sugar transport</keyword>
<keyword id="KW-0769">Symport</keyword>
<keyword id="KW-0808">Transferase</keyword>
<keyword id="KW-0812">Transmembrane</keyword>
<keyword id="KW-1133">Transmembrane helix</keyword>
<keyword id="KW-0813">Transport</keyword>
<name>LACY_LACDA</name>
<gene>
    <name type="primary">lacY</name>
    <name type="ordered locus">Ldb1202</name>
</gene>
<proteinExistence type="inferred from homology"/>
<comment type="function">
    <text>Responsible for transport of beta-galactosides into the cell, with the concomitant uptake of protons (symport system), and also for transport of homologous and heterologous exchange of beta-galactosides.</text>
</comment>
<comment type="subcellular location">
    <subcellularLocation>
        <location>Cell membrane</location>
        <topology>Multi-pass membrane protein</topology>
    </subcellularLocation>
</comment>
<comment type="domain">
    <text>The PTS EIIA type-1 domain may serve a regulatory function, through its phosphorylation activity.</text>
</comment>
<comment type="similarity">
    <text evidence="4">In the N-terminal section; belongs to the sodium:galactoside symporter (TC 2.A.2) family.</text>
</comment>
<reference key="1">
    <citation type="journal article" date="1991" name="J. Bacteriol.">
        <title>Lactose metabolism in Lactobacillus bulgaricus: analysis of the primary structure and expression of the genes involved.</title>
        <authorList>
            <person name="Leong-Morgenthaler P.M."/>
            <person name="Zwahlen M.-C."/>
            <person name="Hottinger H."/>
        </authorList>
    </citation>
    <scope>NUCLEOTIDE SEQUENCE [GENOMIC DNA]</scope>
</reference>
<reference key="2">
    <citation type="journal article" date="2006" name="Proc. Natl. Acad. Sci. U.S.A.">
        <title>The complete genome sequence of Lactobacillus bulgaricus reveals extensive and ongoing reductive evolution.</title>
        <authorList>
            <person name="van de Guchte M."/>
            <person name="Penaud S."/>
            <person name="Grimaldi C."/>
            <person name="Barbe V."/>
            <person name="Bryson K."/>
            <person name="Nicolas P."/>
            <person name="Robert C."/>
            <person name="Oztas S."/>
            <person name="Mangenot S."/>
            <person name="Couloux A."/>
            <person name="Loux V."/>
            <person name="Dervyn R."/>
            <person name="Bossy R."/>
            <person name="Bolotin A."/>
            <person name="Batto J.-M."/>
            <person name="Walunas T."/>
            <person name="Gibrat J.-F."/>
            <person name="Bessieres P."/>
            <person name="Weissenbach J."/>
            <person name="Ehrlich S.D."/>
            <person name="Maguin E."/>
        </authorList>
    </citation>
    <scope>NUCLEOTIDE SEQUENCE [LARGE SCALE GENOMIC DNA]</scope>
    <source>
        <strain>ATCC 11842 / DSM 20081 / BCRC 10696 / JCM 1002 / NBRC 13953 / NCIMB 11778 / NCTC 12712 / WDCM 00102 / Lb 14</strain>
    </source>
</reference>
<organism>
    <name type="scientific">Lactobacillus delbrueckii subsp. bulgaricus (strain ATCC 11842 / DSM 20081 / BCRC 10696 / JCM 1002 / NBRC 13953 / NCIMB 11778 / NCTC 12712 / WDCM 00102 / Lb 14)</name>
    <dbReference type="NCBI Taxonomy" id="390333"/>
    <lineage>
        <taxon>Bacteria</taxon>
        <taxon>Bacillati</taxon>
        <taxon>Bacillota</taxon>
        <taxon>Bacilli</taxon>
        <taxon>Lactobacillales</taxon>
        <taxon>Lactobacillaceae</taxon>
        <taxon>Lactobacillus</taxon>
    </lineage>
</organism>
<dbReference type="EC" id="2.7.1.-"/>
<dbReference type="EMBL" id="M55068">
    <property type="protein sequence ID" value="AAA25243.1"/>
    <property type="molecule type" value="Genomic_DNA"/>
</dbReference>
<dbReference type="EMBL" id="CR954253">
    <property type="protein sequence ID" value="CAI98004.1"/>
    <property type="molecule type" value="Genomic_DNA"/>
</dbReference>
<dbReference type="PIR" id="A38538">
    <property type="entry name" value="A38538"/>
</dbReference>
<dbReference type="RefSeq" id="WP_011543943.1">
    <property type="nucleotide sequence ID" value="NC_008054.1"/>
</dbReference>
<dbReference type="SMR" id="P22733"/>
<dbReference type="STRING" id="390333.Ldb1202"/>
<dbReference type="KEGG" id="ldb:Ldb1202"/>
<dbReference type="PATRIC" id="fig|390333.13.peg.1438"/>
<dbReference type="eggNOG" id="COG2190">
    <property type="taxonomic scope" value="Bacteria"/>
</dbReference>
<dbReference type="eggNOG" id="COG2211">
    <property type="taxonomic scope" value="Bacteria"/>
</dbReference>
<dbReference type="HOGENOM" id="CLU_027408_1_0_9"/>
<dbReference type="BioCyc" id="LDEL390333:LDB_RS05150-MONOMER"/>
<dbReference type="Proteomes" id="UP000001259">
    <property type="component" value="Chromosome"/>
</dbReference>
<dbReference type="GO" id="GO:0005886">
    <property type="term" value="C:plasma membrane"/>
    <property type="evidence" value="ECO:0007669"/>
    <property type="project" value="UniProtKB-SubCell"/>
</dbReference>
<dbReference type="GO" id="GO:0016301">
    <property type="term" value="F:kinase activity"/>
    <property type="evidence" value="ECO:0007669"/>
    <property type="project" value="UniProtKB-KW"/>
</dbReference>
<dbReference type="GO" id="GO:0015293">
    <property type="term" value="F:symporter activity"/>
    <property type="evidence" value="ECO:0007669"/>
    <property type="project" value="UniProtKB-KW"/>
</dbReference>
<dbReference type="GO" id="GO:0009401">
    <property type="term" value="P:phosphoenolpyruvate-dependent sugar phosphotransferase system"/>
    <property type="evidence" value="ECO:0007669"/>
    <property type="project" value="InterPro"/>
</dbReference>
<dbReference type="GO" id="GO:0006814">
    <property type="term" value="P:sodium ion transport"/>
    <property type="evidence" value="ECO:0007669"/>
    <property type="project" value="InterPro"/>
</dbReference>
<dbReference type="CDD" id="cd17332">
    <property type="entry name" value="MFS_MelB_like"/>
    <property type="match status" value="1"/>
</dbReference>
<dbReference type="CDD" id="cd00210">
    <property type="entry name" value="PTS_IIA_glc"/>
    <property type="match status" value="1"/>
</dbReference>
<dbReference type="Gene3D" id="2.70.70.10">
    <property type="entry name" value="Glucose Permease (Domain IIA)"/>
    <property type="match status" value="1"/>
</dbReference>
<dbReference type="Gene3D" id="1.20.1250.20">
    <property type="entry name" value="MFS general substrate transporter like domains"/>
    <property type="match status" value="2"/>
</dbReference>
<dbReference type="InterPro" id="IPR011055">
    <property type="entry name" value="Dup_hybrid_motif"/>
</dbReference>
<dbReference type="InterPro" id="IPR039672">
    <property type="entry name" value="MFS_2"/>
</dbReference>
<dbReference type="InterPro" id="IPR036259">
    <property type="entry name" value="MFS_trans_sf"/>
</dbReference>
<dbReference type="InterPro" id="IPR001927">
    <property type="entry name" value="Na/Gal_symport"/>
</dbReference>
<dbReference type="InterPro" id="IPR018043">
    <property type="entry name" value="Na/Gal_symport_CS"/>
</dbReference>
<dbReference type="InterPro" id="IPR001127">
    <property type="entry name" value="PTS_EIIA_1_perm"/>
</dbReference>
<dbReference type="NCBIfam" id="TIGR00792">
    <property type="entry name" value="gph"/>
    <property type="match status" value="1"/>
</dbReference>
<dbReference type="NCBIfam" id="TIGR00830">
    <property type="entry name" value="PTBA"/>
    <property type="match status" value="1"/>
</dbReference>
<dbReference type="PANTHER" id="PTHR11328">
    <property type="entry name" value="MAJOR FACILITATOR SUPERFAMILY DOMAIN-CONTAINING PROTEIN"/>
    <property type="match status" value="1"/>
</dbReference>
<dbReference type="PANTHER" id="PTHR11328:SF36">
    <property type="entry name" value="MELIBIOSE PERMEASE"/>
    <property type="match status" value="1"/>
</dbReference>
<dbReference type="Pfam" id="PF13347">
    <property type="entry name" value="MFS_2"/>
    <property type="match status" value="1"/>
</dbReference>
<dbReference type="Pfam" id="PF00358">
    <property type="entry name" value="PTS_EIIA_1"/>
    <property type="match status" value="1"/>
</dbReference>
<dbReference type="SUPFAM" id="SSF51261">
    <property type="entry name" value="Duplicated hybrid motif"/>
    <property type="match status" value="1"/>
</dbReference>
<dbReference type="SUPFAM" id="SSF103473">
    <property type="entry name" value="MFS general substrate transporter"/>
    <property type="match status" value="1"/>
</dbReference>
<dbReference type="PROSITE" id="PS00872">
    <property type="entry name" value="NA_GALACTOSIDE_SYMP"/>
    <property type="match status" value="1"/>
</dbReference>
<dbReference type="PROSITE" id="PS51093">
    <property type="entry name" value="PTS_EIIA_TYPE_1"/>
    <property type="match status" value="1"/>
</dbReference>
<dbReference type="PROSITE" id="PS00371">
    <property type="entry name" value="PTS_EIIA_TYPE_1_HIS"/>
    <property type="match status" value="1"/>
</dbReference>
<accession>P22733</accession>
<accession>Q1G9Z3</accession>
<sequence>MKKKLVSRLSYAAGAFGNDVFYATLSTYFIVFVTTHLFNAGDHKMIFIITNLITAIRIGEVLLDPLIGNAIDRTESRWGKFKPWVVGGGIISSLALLALFTDFGGINQSKPVVYLVIFGIVYLIMDIFYSFKDTGFWAMIPALSLDSREREKTSTFARVGSTIGANLVGVVITPIILFFSASKANPNGDKQGWFFFALIVAIVGILTSITVGLGTHEVKSALRESNEKTTLKQVFKVLGQNDQLLWLAFAYWFYGLGINTLNALQLYYFSYILGDARGYSLLYTINTFVGLISASFFPSLAKKFNRNRLFYACIAVMLLGIGVFSVASGSLALSLVGAEFFFIPQPLAFLVVLMIISDAVEYGQLKTGHRDEALTLSVRPLVDKLGGALSNWFVSLIALTAGMTTGATASTITAHGQMVFKLAMFALPAVMLLIAVSIFAKKVFLTEEKHAEIVDQLETQFGQSHAQKPAQAESFTLASPVSGQLMNLDMVDDPVFADKKLGDGFALVPADGKVYAPFAGTVRQLAKTRHSIVLENEHGVLVLIHLGLGTAKLNGTGFVSYVEEGSQVEAGQQILEFWDPAIKQAKLDDTVIVTVINSETFANSQMLLPIGHSVQALDDVFKLEGKN</sequence>
<protein>
    <recommendedName>
        <fullName>Lactose permease</fullName>
    </recommendedName>
    <alternativeName>
        <fullName>Lactose transport protein</fullName>
    </alternativeName>
    <alternativeName>
        <fullName>Lactose-proton symporter</fullName>
    </alternativeName>
    <domain>
        <recommendedName>
            <fullName>Putative phosphotransferase enzyme IIA component</fullName>
            <ecNumber>2.7.1.-</ecNumber>
        </recommendedName>
        <alternativeName>
            <fullName>Putative PTS system EIIA component</fullName>
        </alternativeName>
    </domain>
</protein>
<evidence type="ECO:0000250" key="1"/>
<evidence type="ECO:0000255" key="2"/>
<evidence type="ECO:0000255" key="3">
    <source>
        <dbReference type="PROSITE-ProRule" id="PRU00416"/>
    </source>
</evidence>
<evidence type="ECO:0000305" key="4"/>